<reference key="1">
    <citation type="journal article" date="2000" name="Nucleic Acids Res.">
        <title>Complete genome sequence of the alkaliphilic bacterium Bacillus halodurans and genomic sequence comparison with Bacillus subtilis.</title>
        <authorList>
            <person name="Takami H."/>
            <person name="Nakasone K."/>
            <person name="Takaki Y."/>
            <person name="Maeno G."/>
            <person name="Sasaki R."/>
            <person name="Masui N."/>
            <person name="Fuji F."/>
            <person name="Hirama C."/>
            <person name="Nakamura Y."/>
            <person name="Ogasawara N."/>
            <person name="Kuhara S."/>
            <person name="Horikoshi K."/>
        </authorList>
    </citation>
    <scope>NUCLEOTIDE SEQUENCE [LARGE SCALE GENOMIC DNA]</scope>
    <source>
        <strain>ATCC BAA-125 / DSM 18197 / FERM 7344 / JCM 9153 / C-125</strain>
    </source>
</reference>
<comment type="catalytic activity">
    <reaction>
        <text>tRNA(Gly) + glycine + ATP = glycyl-tRNA(Gly) + AMP + diphosphate</text>
        <dbReference type="Rhea" id="RHEA:16013"/>
        <dbReference type="Rhea" id="RHEA-COMP:9664"/>
        <dbReference type="Rhea" id="RHEA-COMP:9683"/>
        <dbReference type="ChEBI" id="CHEBI:30616"/>
        <dbReference type="ChEBI" id="CHEBI:33019"/>
        <dbReference type="ChEBI" id="CHEBI:57305"/>
        <dbReference type="ChEBI" id="CHEBI:78442"/>
        <dbReference type="ChEBI" id="CHEBI:78522"/>
        <dbReference type="ChEBI" id="CHEBI:456215"/>
        <dbReference type="EC" id="6.1.1.14"/>
    </reaction>
</comment>
<comment type="subunit">
    <text evidence="1">Tetramer of two alpha and two beta subunits.</text>
</comment>
<comment type="subcellular location">
    <subcellularLocation>
        <location evidence="1">Cytoplasm</location>
    </subcellularLocation>
</comment>
<comment type="similarity">
    <text evidence="2">Belongs to the class-II aminoacyl-tRNA synthetase family.</text>
</comment>
<proteinExistence type="inferred from homology"/>
<organism>
    <name type="scientific">Halalkalibacterium halodurans (strain ATCC BAA-125 / DSM 18197 / FERM 7344 / JCM 9153 / C-125)</name>
    <name type="common">Bacillus halodurans</name>
    <dbReference type="NCBI Taxonomy" id="272558"/>
    <lineage>
        <taxon>Bacteria</taxon>
        <taxon>Bacillati</taxon>
        <taxon>Bacillota</taxon>
        <taxon>Bacilli</taxon>
        <taxon>Bacillales</taxon>
        <taxon>Bacillaceae</taxon>
        <taxon>Halalkalibacterium (ex Joshi et al. 2022)</taxon>
    </lineage>
</organism>
<feature type="chain" id="PRO_0000072826" description="Glycine--tRNA ligase alpha subunit">
    <location>
        <begin position="1"/>
        <end position="297"/>
    </location>
</feature>
<name>SYGA_HALH5</name>
<accession>Q9KD49</accession>
<keyword id="KW-0030">Aminoacyl-tRNA synthetase</keyword>
<keyword id="KW-0067">ATP-binding</keyword>
<keyword id="KW-0963">Cytoplasm</keyword>
<keyword id="KW-0436">Ligase</keyword>
<keyword id="KW-0547">Nucleotide-binding</keyword>
<keyword id="KW-0648">Protein biosynthesis</keyword>
<keyword id="KW-1185">Reference proteome</keyword>
<gene>
    <name type="primary">glyQ</name>
    <name type="ordered locus">BH1370</name>
</gene>
<sequence>MNVQTMILTLQEYWSKQNCILLQAYDTEKGAGTMSPYTMLRTIGPEPWNVAYVEPSRRPADGRYGENPNRLYQHHQFQVIMKPSPTNIQELYLDSLRALGINPLEHDIRFVEDNWENPSLGCAGLGWEVWLDGMEITQFTYFQQVGGLEANPVSAEITYGLERLASYIQDKENVFDLEWVEGFTYGDIFTQPEYEHSKYTFEVSDSAMLFELFSTYEKEADRALEENLVFPAYDYVLKCSHTFNLLDARGAISVTERTGYIGRVRNLARKCAKKYYEEREKLGFPMLKNKEADHEQA</sequence>
<evidence type="ECO:0000250" key="1"/>
<evidence type="ECO:0000305" key="2"/>
<dbReference type="EC" id="6.1.1.14"/>
<dbReference type="EMBL" id="BA000004">
    <property type="protein sequence ID" value="BAB05089.1"/>
    <property type="molecule type" value="Genomic_DNA"/>
</dbReference>
<dbReference type="PIR" id="B83821">
    <property type="entry name" value="B83821"/>
</dbReference>
<dbReference type="RefSeq" id="WP_010897535.1">
    <property type="nucleotide sequence ID" value="NC_002570.2"/>
</dbReference>
<dbReference type="SMR" id="Q9KD49"/>
<dbReference type="STRING" id="272558.gene:10727264"/>
<dbReference type="GeneID" id="87596990"/>
<dbReference type="KEGG" id="bha:BH1370"/>
<dbReference type="eggNOG" id="COG0752">
    <property type="taxonomic scope" value="Bacteria"/>
</dbReference>
<dbReference type="HOGENOM" id="CLU_057066_1_0_9"/>
<dbReference type="OrthoDB" id="9802183at2"/>
<dbReference type="Proteomes" id="UP000001258">
    <property type="component" value="Chromosome"/>
</dbReference>
<dbReference type="GO" id="GO:0005829">
    <property type="term" value="C:cytosol"/>
    <property type="evidence" value="ECO:0007669"/>
    <property type="project" value="TreeGrafter"/>
</dbReference>
<dbReference type="GO" id="GO:0005524">
    <property type="term" value="F:ATP binding"/>
    <property type="evidence" value="ECO:0007669"/>
    <property type="project" value="UniProtKB-UniRule"/>
</dbReference>
<dbReference type="GO" id="GO:0140096">
    <property type="term" value="F:catalytic activity, acting on a protein"/>
    <property type="evidence" value="ECO:0007669"/>
    <property type="project" value="UniProtKB-ARBA"/>
</dbReference>
<dbReference type="GO" id="GO:0004820">
    <property type="term" value="F:glycine-tRNA ligase activity"/>
    <property type="evidence" value="ECO:0007669"/>
    <property type="project" value="UniProtKB-UniRule"/>
</dbReference>
<dbReference type="GO" id="GO:0016740">
    <property type="term" value="F:transferase activity"/>
    <property type="evidence" value="ECO:0007669"/>
    <property type="project" value="UniProtKB-ARBA"/>
</dbReference>
<dbReference type="GO" id="GO:0006426">
    <property type="term" value="P:glycyl-tRNA aminoacylation"/>
    <property type="evidence" value="ECO:0007669"/>
    <property type="project" value="UniProtKB-UniRule"/>
</dbReference>
<dbReference type="CDD" id="cd00733">
    <property type="entry name" value="GlyRS_alpha_core"/>
    <property type="match status" value="1"/>
</dbReference>
<dbReference type="FunFam" id="3.30.930.10:FF:000006">
    <property type="entry name" value="Glycine--tRNA ligase alpha subunit"/>
    <property type="match status" value="1"/>
</dbReference>
<dbReference type="Gene3D" id="3.30.930.10">
    <property type="entry name" value="Bira Bifunctional Protein, Domain 2"/>
    <property type="match status" value="1"/>
</dbReference>
<dbReference type="Gene3D" id="1.20.58.180">
    <property type="entry name" value="Class II aaRS and biotin synthetases, domain 2"/>
    <property type="match status" value="1"/>
</dbReference>
<dbReference type="HAMAP" id="MF_00254">
    <property type="entry name" value="Gly_tRNA_synth_alpha"/>
    <property type="match status" value="1"/>
</dbReference>
<dbReference type="InterPro" id="IPR045864">
    <property type="entry name" value="aa-tRNA-synth_II/BPL/LPL"/>
</dbReference>
<dbReference type="InterPro" id="IPR006194">
    <property type="entry name" value="Gly-tRNA-synth_heterodimer"/>
</dbReference>
<dbReference type="InterPro" id="IPR002310">
    <property type="entry name" value="Gly-tRNA_ligase_asu"/>
</dbReference>
<dbReference type="NCBIfam" id="TIGR00388">
    <property type="entry name" value="glyQ"/>
    <property type="match status" value="1"/>
</dbReference>
<dbReference type="NCBIfam" id="NF006827">
    <property type="entry name" value="PRK09348.1"/>
    <property type="match status" value="1"/>
</dbReference>
<dbReference type="PANTHER" id="PTHR30075:SF2">
    <property type="entry name" value="GLYCINE--TRNA LIGASE, CHLOROPLASTIC_MITOCHONDRIAL 2"/>
    <property type="match status" value="1"/>
</dbReference>
<dbReference type="PANTHER" id="PTHR30075">
    <property type="entry name" value="GLYCYL-TRNA SYNTHETASE"/>
    <property type="match status" value="1"/>
</dbReference>
<dbReference type="Pfam" id="PF02091">
    <property type="entry name" value="tRNA-synt_2e"/>
    <property type="match status" value="1"/>
</dbReference>
<dbReference type="PRINTS" id="PR01044">
    <property type="entry name" value="TRNASYNTHGA"/>
</dbReference>
<dbReference type="SUPFAM" id="SSF55681">
    <property type="entry name" value="Class II aaRS and biotin synthetases"/>
    <property type="match status" value="1"/>
</dbReference>
<dbReference type="PROSITE" id="PS50861">
    <property type="entry name" value="AA_TRNA_LIGASE_II_GLYAB"/>
    <property type="match status" value="1"/>
</dbReference>
<protein>
    <recommendedName>
        <fullName>Glycine--tRNA ligase alpha subunit</fullName>
        <ecNumber>6.1.1.14</ecNumber>
    </recommendedName>
    <alternativeName>
        <fullName>Glycyl-tRNA synthetase alpha subunit</fullName>
        <shortName>GlyRS</shortName>
    </alternativeName>
</protein>